<protein>
    <recommendedName>
        <fullName>Cell wall protein TIR4</fullName>
    </recommendedName>
    <alternativeName>
        <fullName>TIP1-related protein 4</fullName>
    </alternativeName>
</protein>
<comment type="function">
    <text evidence="4">Component of the cell wall. Required for anaerobic growth.</text>
</comment>
<comment type="subcellular location">
    <subcellularLocation>
        <location evidence="7 8">Secreted</location>
        <location evidence="7 8">Cell wall</location>
    </subcellularLocation>
    <subcellularLocation>
        <location evidence="6">Membrane</location>
        <topology evidence="6">Lipid-anchor</topology>
        <topology evidence="6">GPI-anchor</topology>
    </subcellularLocation>
</comment>
<comment type="induction">
    <text evidence="4">Induced during anaerobic growth. Induced by cold shock.</text>
</comment>
<comment type="domain">
    <text>The number of the intragenic tandem repeats varies between different S.cerevisiae strains.</text>
</comment>
<comment type="PTM">
    <text evidence="1">The GPI-anchor is attached to the protein in the endoplasmic reticulum and serves to target the protein to the cell surface. There, the glucosamine-inositol phospholipid moiety is cleaved off and the GPI-modified mannoprotein is covalently attached via its lipidless GPI glycan remnant to the 1,6-beta-glucan of the outer cell wall layer (By similarity).</text>
</comment>
<comment type="similarity">
    <text evidence="6">Belongs to the SRP1/TIP1 family.</text>
</comment>
<organism>
    <name type="scientific">Saccharomyces cerevisiae (strain ATCC 204508 / S288c)</name>
    <name type="common">Baker's yeast</name>
    <dbReference type="NCBI Taxonomy" id="559292"/>
    <lineage>
        <taxon>Eukaryota</taxon>
        <taxon>Fungi</taxon>
        <taxon>Dikarya</taxon>
        <taxon>Ascomycota</taxon>
        <taxon>Saccharomycotina</taxon>
        <taxon>Saccharomycetes</taxon>
        <taxon>Saccharomycetales</taxon>
        <taxon>Saccharomycetaceae</taxon>
        <taxon>Saccharomyces</taxon>
    </lineage>
</organism>
<accession>Q12218</accession>
<accession>D6W276</accession>
<evidence type="ECO:0000250" key="1"/>
<evidence type="ECO:0000255" key="2"/>
<evidence type="ECO:0000256" key="3">
    <source>
        <dbReference type="SAM" id="MobiDB-lite"/>
    </source>
</evidence>
<evidence type="ECO:0000269" key="4">
    <source>
    </source>
</evidence>
<evidence type="ECO:0000269" key="5">
    <source>
    </source>
</evidence>
<evidence type="ECO:0000305" key="6"/>
<evidence type="ECO:0000305" key="7">
    <source>
    </source>
</evidence>
<evidence type="ECO:0000305" key="8">
    <source>
    </source>
</evidence>
<proteinExistence type="evidence at protein level"/>
<dbReference type="EMBL" id="U43491">
    <property type="protein sequence ID" value="AAC49489.1"/>
    <property type="molecule type" value="Genomic_DNA"/>
</dbReference>
<dbReference type="EMBL" id="Z74917">
    <property type="protein sequence ID" value="CAA99197.1"/>
    <property type="molecule type" value="Genomic_DNA"/>
</dbReference>
<dbReference type="EMBL" id="BK006948">
    <property type="protein sequence ID" value="DAA10792.1"/>
    <property type="molecule type" value="Genomic_DNA"/>
</dbReference>
<dbReference type="PIR" id="S61993">
    <property type="entry name" value="S61993"/>
</dbReference>
<dbReference type="RefSeq" id="NP_014652.1">
    <property type="nucleotide sequence ID" value="NM_001183428.1"/>
</dbReference>
<dbReference type="BioGRID" id="34414">
    <property type="interactions" value="83"/>
</dbReference>
<dbReference type="DIP" id="DIP-5194N"/>
<dbReference type="FunCoup" id="Q12218">
    <property type="interactions" value="54"/>
</dbReference>
<dbReference type="IntAct" id="Q12218">
    <property type="interactions" value="2"/>
</dbReference>
<dbReference type="MINT" id="Q12218"/>
<dbReference type="STRING" id="4932.YOR009W"/>
<dbReference type="GlyCosmos" id="Q12218">
    <property type="glycosylation" value="5 sites, No reported glycans"/>
</dbReference>
<dbReference type="GlyGen" id="Q12218">
    <property type="glycosylation" value="5 sites"/>
</dbReference>
<dbReference type="PaxDb" id="4932-YOR009W"/>
<dbReference type="TopDownProteomics" id="Q12218"/>
<dbReference type="EnsemblFungi" id="YOR009W_mRNA">
    <property type="protein sequence ID" value="YOR009W"/>
    <property type="gene ID" value="YOR009W"/>
</dbReference>
<dbReference type="GeneID" id="854173"/>
<dbReference type="KEGG" id="sce:YOR009W"/>
<dbReference type="AGR" id="SGD:S000005535"/>
<dbReference type="SGD" id="S000005535">
    <property type="gene designation" value="TIR4"/>
</dbReference>
<dbReference type="VEuPathDB" id="FungiDB:YOR009W"/>
<dbReference type="eggNOG" id="ENOG502S6R6">
    <property type="taxonomic scope" value="Eukaryota"/>
</dbReference>
<dbReference type="GeneTree" id="ENSGT00940000176276"/>
<dbReference type="HOGENOM" id="CLU_580257_0_0_1"/>
<dbReference type="InParanoid" id="Q12218"/>
<dbReference type="OMA" id="TKTVCDS"/>
<dbReference type="OrthoDB" id="4070211at2759"/>
<dbReference type="BioCyc" id="YEAST:G3O-33559-MONOMER"/>
<dbReference type="BioGRID-ORCS" id="854173">
    <property type="hits" value="0 hits in 10 CRISPR screens"/>
</dbReference>
<dbReference type="PRO" id="PR:Q12218"/>
<dbReference type="Proteomes" id="UP000002311">
    <property type="component" value="Chromosome XV"/>
</dbReference>
<dbReference type="RNAct" id="Q12218">
    <property type="molecule type" value="protein"/>
</dbReference>
<dbReference type="GO" id="GO:0071944">
    <property type="term" value="C:cell periphery"/>
    <property type="evidence" value="ECO:0007005"/>
    <property type="project" value="SGD"/>
</dbReference>
<dbReference type="GO" id="GO:0005576">
    <property type="term" value="C:extracellular region"/>
    <property type="evidence" value="ECO:0007669"/>
    <property type="project" value="UniProtKB-KW"/>
</dbReference>
<dbReference type="GO" id="GO:0009277">
    <property type="term" value="C:fungal-type cell wall"/>
    <property type="evidence" value="ECO:0000314"/>
    <property type="project" value="SGD"/>
</dbReference>
<dbReference type="GO" id="GO:0000324">
    <property type="term" value="C:fungal-type vacuole"/>
    <property type="evidence" value="ECO:0007005"/>
    <property type="project" value="SGD"/>
</dbReference>
<dbReference type="GO" id="GO:0098552">
    <property type="term" value="C:side of membrane"/>
    <property type="evidence" value="ECO:0007669"/>
    <property type="project" value="UniProtKB-KW"/>
</dbReference>
<dbReference type="GO" id="GO:0005199">
    <property type="term" value="F:structural constituent of cell wall"/>
    <property type="evidence" value="ECO:0000318"/>
    <property type="project" value="GO_Central"/>
</dbReference>
<dbReference type="GO" id="GO:0031505">
    <property type="term" value="P:fungal-type cell wall organization"/>
    <property type="evidence" value="ECO:0000318"/>
    <property type="project" value="GO_Central"/>
</dbReference>
<dbReference type="InterPro" id="IPR000992">
    <property type="entry name" value="SRP1_TIP1"/>
</dbReference>
<dbReference type="InterPro" id="IPR050788">
    <property type="entry name" value="Yeast_SRP1/TIP1_CWP"/>
</dbReference>
<dbReference type="PANTHER" id="PTHR31002:SF34">
    <property type="entry name" value="CELL WALL PROTEIN CWP1-RELATED"/>
    <property type="match status" value="1"/>
</dbReference>
<dbReference type="PANTHER" id="PTHR31002">
    <property type="entry name" value="SERIPAUPERIN"/>
    <property type="match status" value="1"/>
</dbReference>
<dbReference type="Pfam" id="PF00660">
    <property type="entry name" value="SRP1_TIP1"/>
    <property type="match status" value="1"/>
</dbReference>
<dbReference type="PROSITE" id="PS00724">
    <property type="entry name" value="SRP1_TIP1"/>
    <property type="match status" value="1"/>
</dbReference>
<name>TIR4_YEAST</name>
<feature type="signal peptide" evidence="2">
    <location>
        <begin position="1"/>
        <end position="22"/>
    </location>
</feature>
<feature type="chain" id="PRO_0000267640" description="Cell wall protein TIR4">
    <location>
        <begin position="23"/>
        <end position="465"/>
    </location>
</feature>
<feature type="propeptide" id="PRO_0000267641" description="Removed in mature form" evidence="2">
    <location>
        <begin position="466"/>
        <end position="487"/>
    </location>
</feature>
<feature type="repeat" description="1" evidence="5">
    <location>
        <begin position="137"/>
        <end position="148"/>
    </location>
</feature>
<feature type="repeat" description="2" evidence="5">
    <location>
        <begin position="149"/>
        <end position="160"/>
    </location>
</feature>
<feature type="repeat" description="3" evidence="5">
    <location>
        <begin position="161"/>
        <end position="172"/>
    </location>
</feature>
<feature type="repeat" description="4" evidence="5">
    <location>
        <begin position="173"/>
        <end position="184"/>
    </location>
</feature>
<feature type="repeat" description="5" evidence="5">
    <location>
        <begin position="185"/>
        <end position="196"/>
    </location>
</feature>
<feature type="repeat" description="6" evidence="5">
    <location>
        <begin position="197"/>
        <end position="208"/>
    </location>
</feature>
<feature type="repeat" description="7" evidence="5">
    <location>
        <begin position="209"/>
        <end position="220"/>
    </location>
</feature>
<feature type="repeat" description="8" evidence="5">
    <location>
        <begin position="221"/>
        <end position="232"/>
    </location>
</feature>
<feature type="repeat" description="9" evidence="5">
    <location>
        <begin position="233"/>
        <end position="244"/>
    </location>
</feature>
<feature type="repeat" description="10" evidence="5">
    <location>
        <begin position="245"/>
        <end position="256"/>
    </location>
</feature>
<feature type="repeat" description="11" evidence="5">
    <location>
        <begin position="257"/>
        <end position="268"/>
    </location>
</feature>
<feature type="region of interest" description="11 X 12 AA approximate tandem repeats, Ser-rich">
    <location>
        <begin position="137"/>
        <end position="268"/>
    </location>
</feature>
<feature type="region of interest" description="Disordered" evidence="3">
    <location>
        <begin position="206"/>
        <end position="299"/>
    </location>
</feature>
<feature type="lipid moiety-binding region" description="GPI-anchor amidated asparagine" evidence="2">
    <location>
        <position position="465"/>
    </location>
</feature>
<feature type="glycosylation site" description="N-linked (GlcNAc...) asparagine" evidence="2">
    <location>
        <position position="327"/>
    </location>
</feature>
<feature type="glycosylation site" description="N-linked (GlcNAc...) asparagine" evidence="2">
    <location>
        <position position="348"/>
    </location>
</feature>
<feature type="glycosylation site" description="N-linked (GlcNAc...) asparagine" evidence="2">
    <location>
        <position position="368"/>
    </location>
</feature>
<feature type="glycosylation site" description="N-linked (GlcNAc...) asparagine" evidence="2">
    <location>
        <position position="403"/>
    </location>
</feature>
<feature type="glycosylation site" description="N-linked (GlcNAc...) asparagine" evidence="2">
    <location>
        <position position="404"/>
    </location>
</feature>
<keyword id="KW-0134">Cell wall</keyword>
<keyword id="KW-0961">Cell wall biogenesis/degradation</keyword>
<keyword id="KW-0325">Glycoprotein</keyword>
<keyword id="KW-0336">GPI-anchor</keyword>
<keyword id="KW-0449">Lipoprotein</keyword>
<keyword id="KW-0472">Membrane</keyword>
<keyword id="KW-1185">Reference proteome</keyword>
<keyword id="KW-0677">Repeat</keyword>
<keyword id="KW-0964">Secreted</keyword>
<keyword id="KW-0732">Signal</keyword>
<gene>
    <name type="primary">TIR4</name>
    <name type="ordered locus">YOR009W</name>
    <name type="ORF">UNB487</name>
</gene>
<sequence length="487" mass="47849">MAYSKITLLAALAAIAYAQTQAQINELNVVLDDVKTNIADYITLSYTPNSGFSLDQMPAGIMDIAAQLVANPSDDSYTTLYSEVDFSAVEHMLTMVPWYSSRLLPELEAMDASLTTSSSAATSSSEVASSSIASSTSSSVAPSSSEVVSSSVAPSSSEVVSSSVAPSSSEVVSSSVASSSSEVASSSVAPSSSEVVSSSVASSSSEVASSSVAPSSSEVVSSSVAPSSSEVVSSSVASSSSEVASSSVAPSSSEVVSSSVASSTSEATSSSAVTSSSAVSSSTESVSSSSVSSSSAVSSSEAVSSSPVSSVVSSSAGPASSSVAPYNSTIASSSSTAQTSISTIAPYNSTTTTTPASSASSVIISTRNGTTVTETDNTLVTKETTVCDYSSTSAVPASTTGYNNSTKVSTATICSTCKEGTSTATDFSTLKTTVTVCDSACQAKKSATVVSVQSKTTGIVEQTENGAAKAVIGMGAGALAAVAAMLL</sequence>
<reference key="1">
    <citation type="journal article" date="1996" name="Yeast">
        <title>The sequence of a 30 kb fragment on the left arm of chromosome XV from Saccharomyces cerevisiae reveals 15 open reading frames, five of which correspond to previously identified genes.</title>
        <authorList>
            <person name="Sterky F."/>
            <person name="Holmberg A."/>
            <person name="Pettersson B."/>
            <person name="Uhlen M."/>
        </authorList>
    </citation>
    <scope>NUCLEOTIDE SEQUENCE [GENOMIC DNA]</scope>
</reference>
<reference key="2">
    <citation type="journal article" date="1997" name="Nature">
        <title>The nucleotide sequence of Saccharomyces cerevisiae chromosome XV.</title>
        <authorList>
            <person name="Dujon B."/>
            <person name="Albermann K."/>
            <person name="Aldea M."/>
            <person name="Alexandraki D."/>
            <person name="Ansorge W."/>
            <person name="Arino J."/>
            <person name="Benes V."/>
            <person name="Bohn C."/>
            <person name="Bolotin-Fukuhara M."/>
            <person name="Bordonne R."/>
            <person name="Boyer J."/>
            <person name="Camasses A."/>
            <person name="Casamayor A."/>
            <person name="Casas C."/>
            <person name="Cheret G."/>
            <person name="Cziepluch C."/>
            <person name="Daignan-Fornier B."/>
            <person name="Dang V.-D."/>
            <person name="de Haan M."/>
            <person name="Delius H."/>
            <person name="Durand P."/>
            <person name="Fairhead C."/>
            <person name="Feldmann H."/>
            <person name="Gaillon L."/>
            <person name="Galisson F."/>
            <person name="Gamo F.-J."/>
            <person name="Gancedo C."/>
            <person name="Goffeau A."/>
            <person name="Goulding S.E."/>
            <person name="Grivell L.A."/>
            <person name="Habbig B."/>
            <person name="Hand N.J."/>
            <person name="Hani J."/>
            <person name="Hattenhorst U."/>
            <person name="Hebling U."/>
            <person name="Hernando Y."/>
            <person name="Herrero E."/>
            <person name="Heumann K."/>
            <person name="Hiesel R."/>
            <person name="Hilger F."/>
            <person name="Hofmann B."/>
            <person name="Hollenberg C.P."/>
            <person name="Hughes B."/>
            <person name="Jauniaux J.-C."/>
            <person name="Kalogeropoulos A."/>
            <person name="Katsoulou C."/>
            <person name="Kordes E."/>
            <person name="Lafuente M.J."/>
            <person name="Landt O."/>
            <person name="Louis E.J."/>
            <person name="Maarse A.C."/>
            <person name="Madania A."/>
            <person name="Mannhaupt G."/>
            <person name="Marck C."/>
            <person name="Martin R.P."/>
            <person name="Mewes H.-W."/>
            <person name="Michaux G."/>
            <person name="Paces V."/>
            <person name="Parle-McDermott A.G."/>
            <person name="Pearson B.M."/>
            <person name="Perrin A."/>
            <person name="Pettersson B."/>
            <person name="Poch O."/>
            <person name="Pohl T.M."/>
            <person name="Poirey R."/>
            <person name="Portetelle D."/>
            <person name="Pujol A."/>
            <person name="Purnelle B."/>
            <person name="Ramezani Rad M."/>
            <person name="Rechmann S."/>
            <person name="Schwager C."/>
            <person name="Schweizer M."/>
            <person name="Sor F."/>
            <person name="Sterky F."/>
            <person name="Tarassov I.A."/>
            <person name="Teodoru C."/>
            <person name="Tettelin H."/>
            <person name="Thierry A."/>
            <person name="Tobiasch E."/>
            <person name="Tzermia M."/>
            <person name="Uhlen M."/>
            <person name="Unseld M."/>
            <person name="Valens M."/>
            <person name="Vandenbol M."/>
            <person name="Vetter I."/>
            <person name="Vlcek C."/>
            <person name="Voet M."/>
            <person name="Volckaert G."/>
            <person name="Voss H."/>
            <person name="Wambutt R."/>
            <person name="Wedler H."/>
            <person name="Wiemann S."/>
            <person name="Winsor B."/>
            <person name="Wolfe K.H."/>
            <person name="Zollner A."/>
            <person name="Zumstein E."/>
            <person name="Kleine K."/>
        </authorList>
    </citation>
    <scope>NUCLEOTIDE SEQUENCE [LARGE SCALE GENOMIC DNA]</scope>
    <source>
        <strain>ATCC 204508 / S288c</strain>
    </source>
</reference>
<reference key="3">
    <citation type="journal article" date="2014" name="G3 (Bethesda)">
        <title>The reference genome sequence of Saccharomyces cerevisiae: Then and now.</title>
        <authorList>
            <person name="Engel S.R."/>
            <person name="Dietrich F.S."/>
            <person name="Fisk D.G."/>
            <person name="Binkley G."/>
            <person name="Balakrishnan R."/>
            <person name="Costanzo M.C."/>
            <person name="Dwight S.S."/>
            <person name="Hitz B.C."/>
            <person name="Karra K."/>
            <person name="Nash R.S."/>
            <person name="Weng S."/>
            <person name="Wong E.D."/>
            <person name="Lloyd P."/>
            <person name="Skrzypek M.S."/>
            <person name="Miyasato S.R."/>
            <person name="Simison M."/>
            <person name="Cherry J.M."/>
        </authorList>
    </citation>
    <scope>GENOME REANNOTATION</scope>
    <source>
        <strain>ATCC 204508 / S288c</strain>
    </source>
</reference>
<reference key="4">
    <citation type="journal article" date="1998" name="Mol. Gen. Genet.">
        <title>Screening for glycosylphosphatidylinositol (GPI)-dependent cell wall proteins in Saccharomyces cerevisiae.</title>
        <authorList>
            <person name="Hamada K."/>
            <person name="Fukuchi S."/>
            <person name="Arisawa M."/>
            <person name="Baba M."/>
            <person name="Kitada K."/>
        </authorList>
    </citation>
    <scope>SUBCELLULAR LOCATION</scope>
</reference>
<reference key="5">
    <citation type="journal article" date="1999" name="J. Bacteriol.">
        <title>Amino acid residues in the omega-minus region participate in cellular localization of yeast glycosylphosphatidylinositol-attached proteins.</title>
        <authorList>
            <person name="Hamada K."/>
            <person name="Terashima H."/>
            <person name="Arisawa M."/>
            <person name="Yabuki N."/>
            <person name="Kitada K."/>
        </authorList>
    </citation>
    <scope>GPI-ANCHOR</scope>
    <scope>SUBCELLULAR LOCATION</scope>
</reference>
<reference key="6">
    <citation type="journal article" date="2001" name="J. Bacteriol.">
        <title>Reciprocal regulation of anaerobic and aerobic cell wall mannoprotein gene expression in Saccharomyces cerevisiae.</title>
        <authorList>
            <person name="Abramova N.E."/>
            <person name="Sertil O."/>
            <person name="Mehta S."/>
            <person name="Lowry C.V."/>
        </authorList>
    </citation>
    <scope>FUNCTION</scope>
    <scope>INDUCTION</scope>
</reference>
<reference key="7">
    <citation type="journal article" date="2005" name="Nat. Genet.">
        <title>Intragenic tandem repeats generate functional variability.</title>
        <authorList>
            <person name="Verstrepen K.J."/>
            <person name="Jansen A."/>
            <person name="Lewitter F."/>
            <person name="Fink G.R."/>
        </authorList>
    </citation>
    <scope>REPEATS</scope>
</reference>